<gene>
    <name type="primary">sra-17</name>
    <name type="ORF">F28C12.1</name>
</gene>
<organism>
    <name type="scientific">Caenorhabditis elegans</name>
    <dbReference type="NCBI Taxonomy" id="6239"/>
    <lineage>
        <taxon>Eukaryota</taxon>
        <taxon>Metazoa</taxon>
        <taxon>Ecdysozoa</taxon>
        <taxon>Nematoda</taxon>
        <taxon>Chromadorea</taxon>
        <taxon>Rhabditida</taxon>
        <taxon>Rhabditina</taxon>
        <taxon>Rhabditomorpha</taxon>
        <taxon>Rhabditoidea</taxon>
        <taxon>Rhabditidae</taxon>
        <taxon>Peloderinae</taxon>
        <taxon>Caenorhabditis</taxon>
    </lineage>
</organism>
<protein>
    <recommendedName>
        <fullName>Serpentine receptor class alpha-17</fullName>
        <shortName>Protein sra-17</shortName>
    </recommendedName>
</protein>
<reference key="1">
    <citation type="journal article" date="1998" name="Science">
        <title>Genome sequence of the nematode C. elegans: a platform for investigating biology.</title>
        <authorList>
            <consortium name="The C. elegans sequencing consortium"/>
        </authorList>
    </citation>
    <scope>NUCLEOTIDE SEQUENCE [LARGE SCALE GENOMIC DNA]</scope>
    <source>
        <strain>Bristol N2</strain>
    </source>
</reference>
<name>SRA17_CAEEL</name>
<comment type="subcellular location">
    <subcellularLocation>
        <location evidence="2">Membrane</location>
        <topology evidence="2">Multi-pass membrane protein</topology>
    </subcellularLocation>
</comment>
<comment type="similarity">
    <text evidence="2">Belongs to the nematode receptor-like protein sra family.</text>
</comment>
<dbReference type="EMBL" id="Z93380">
    <property type="protein sequence ID" value="CAB07598.2"/>
    <property type="molecule type" value="Genomic_DNA"/>
</dbReference>
<dbReference type="PIR" id="T21474">
    <property type="entry name" value="T21474"/>
</dbReference>
<dbReference type="RefSeq" id="NP_493212.2">
    <property type="nucleotide sequence ID" value="NM_060811.2"/>
</dbReference>
<dbReference type="SMR" id="O17842"/>
<dbReference type="FunCoup" id="O17842">
    <property type="interactions" value="10"/>
</dbReference>
<dbReference type="STRING" id="6239.F28C12.1.1"/>
<dbReference type="PaxDb" id="6239-F28C12.1"/>
<dbReference type="EnsemblMetazoa" id="F28C12.1.1">
    <property type="protein sequence ID" value="F28C12.1.1"/>
    <property type="gene ID" value="WBGene00005043"/>
</dbReference>
<dbReference type="GeneID" id="185053"/>
<dbReference type="KEGG" id="cel:CELE_F28C12.1"/>
<dbReference type="UCSC" id="F28C12.1">
    <property type="organism name" value="c. elegans"/>
</dbReference>
<dbReference type="AGR" id="WB:WBGene00005043"/>
<dbReference type="CTD" id="185053"/>
<dbReference type="WormBase" id="F28C12.1">
    <property type="protein sequence ID" value="CE33385"/>
    <property type="gene ID" value="WBGene00005043"/>
    <property type="gene designation" value="sra-17"/>
</dbReference>
<dbReference type="eggNOG" id="ENOG502THAY">
    <property type="taxonomic scope" value="Eukaryota"/>
</dbReference>
<dbReference type="GeneTree" id="ENSGT00970000195862"/>
<dbReference type="HOGENOM" id="CLU_070413_0_0_1"/>
<dbReference type="InParanoid" id="O17842"/>
<dbReference type="OrthoDB" id="5855692at2759"/>
<dbReference type="PhylomeDB" id="O17842"/>
<dbReference type="PRO" id="PR:O17842"/>
<dbReference type="Proteomes" id="UP000001940">
    <property type="component" value="Chromosome I"/>
</dbReference>
<dbReference type="Bgee" id="WBGene00005043">
    <property type="expression patterns" value="Expressed in embryo"/>
</dbReference>
<dbReference type="GO" id="GO:0016020">
    <property type="term" value="C:membrane"/>
    <property type="evidence" value="ECO:0007669"/>
    <property type="project" value="UniProtKB-SubCell"/>
</dbReference>
<dbReference type="GO" id="GO:0004930">
    <property type="term" value="F:G protein-coupled receptor activity"/>
    <property type="evidence" value="ECO:0007669"/>
    <property type="project" value="InterPro"/>
</dbReference>
<dbReference type="GO" id="GO:0007606">
    <property type="term" value="P:sensory perception of chemical stimulus"/>
    <property type="evidence" value="ECO:0007669"/>
    <property type="project" value="InterPro"/>
</dbReference>
<dbReference type="Gene3D" id="1.20.1070.10">
    <property type="entry name" value="Rhodopsin 7-helix transmembrane proteins"/>
    <property type="match status" value="1"/>
</dbReference>
<dbReference type="InterPro" id="IPR000344">
    <property type="entry name" value="7TM_GPCR_serpentine_rcpt_Sra"/>
</dbReference>
<dbReference type="PANTHER" id="PTHR31582:SF2">
    <property type="entry name" value="G-PROTEIN COUPLED RECEPTORS FAMILY 1 PROFILE DOMAIN-CONTAINING PROTEIN-RELATED"/>
    <property type="match status" value="1"/>
</dbReference>
<dbReference type="PANTHER" id="PTHR31582">
    <property type="entry name" value="SERPENTINE RECEPTOR, CLASS A (ALPHA)-RELATED-RELATED"/>
    <property type="match status" value="1"/>
</dbReference>
<dbReference type="Pfam" id="PF02117">
    <property type="entry name" value="7TM_GPCR_Sra"/>
    <property type="match status" value="1"/>
</dbReference>
<dbReference type="PRINTS" id="PR00697">
    <property type="entry name" value="TMPROTEINSRA"/>
</dbReference>
<keyword id="KW-0472">Membrane</keyword>
<keyword id="KW-1185">Reference proteome</keyword>
<keyword id="KW-0812">Transmembrane</keyword>
<keyword id="KW-1133">Transmembrane helix</keyword>
<accession>O17842</accession>
<feature type="chain" id="PRO_0000104480" description="Serpentine receptor class alpha-17">
    <location>
        <begin position="1"/>
        <end position="337"/>
    </location>
</feature>
<feature type="transmembrane region" description="Helical" evidence="1">
    <location>
        <begin position="28"/>
        <end position="48"/>
    </location>
</feature>
<feature type="transmembrane region" description="Helical" evidence="1">
    <location>
        <begin position="110"/>
        <end position="130"/>
    </location>
</feature>
<feature type="transmembrane region" description="Helical" evidence="1">
    <location>
        <begin position="155"/>
        <end position="175"/>
    </location>
</feature>
<feature type="transmembrane region" description="Helical" evidence="1">
    <location>
        <begin position="197"/>
        <end position="217"/>
    </location>
</feature>
<feature type="transmembrane region" description="Helical" evidence="1">
    <location>
        <begin position="247"/>
        <end position="267"/>
    </location>
</feature>
<feature type="transmembrane region" description="Helical" evidence="1">
    <location>
        <begin position="282"/>
        <end position="302"/>
    </location>
</feature>
<proteinExistence type="inferred from homology"/>
<evidence type="ECO:0000255" key="1"/>
<evidence type="ECO:0000305" key="2"/>
<sequence>MNQTELLESLKCASEGMVKAMTSTTMKLNFVFIATVIFLSFYFAGLAIQALLRNNIFSNSTRHILIVCLLNSIVHQAVTLETRIHQVYRSFVYSSEPCRLLFHFTECEVELYFYYLTNYFSTYAVFSLTFDRLVSHYKPKYYFSHQYYVSNSLLIIQLLLSLSTYYVGLYGVPLVGYAPICYYTPRLAVNFSKINDFRTATMVFCIIVTIFIYYLSVKSEKQIHRTSYSPGERYIACENVATSQSVCILIVLQFACIMLSSFGVNYIRARESLMSEENFNKIAPFFPGVTYASLCLPLVIYFKTKLTIRNRKLRIGVMTSMYGDVGDHMNRLKKSWE</sequence>